<comment type="function">
    <text evidence="1">Catalyzes the methylthiolation of N6-(dimethylallyl)adenosine (i(6)A), leading to the formation of 2-methylthio-N6-(dimethylallyl)adenosine (ms(2)i(6)A) at position 37 in tRNAs that read codons beginning with uridine.</text>
</comment>
<comment type="catalytic activity">
    <reaction evidence="1">
        <text>N(6)-dimethylallyladenosine(37) in tRNA + (sulfur carrier)-SH + AH2 + 2 S-adenosyl-L-methionine = 2-methylsulfanyl-N(6)-dimethylallyladenosine(37) in tRNA + (sulfur carrier)-H + 5'-deoxyadenosine + L-methionine + A + S-adenosyl-L-homocysteine + 2 H(+)</text>
        <dbReference type="Rhea" id="RHEA:37067"/>
        <dbReference type="Rhea" id="RHEA-COMP:10375"/>
        <dbReference type="Rhea" id="RHEA-COMP:10376"/>
        <dbReference type="Rhea" id="RHEA-COMP:14737"/>
        <dbReference type="Rhea" id="RHEA-COMP:14739"/>
        <dbReference type="ChEBI" id="CHEBI:13193"/>
        <dbReference type="ChEBI" id="CHEBI:15378"/>
        <dbReference type="ChEBI" id="CHEBI:17319"/>
        <dbReference type="ChEBI" id="CHEBI:17499"/>
        <dbReference type="ChEBI" id="CHEBI:29917"/>
        <dbReference type="ChEBI" id="CHEBI:57844"/>
        <dbReference type="ChEBI" id="CHEBI:57856"/>
        <dbReference type="ChEBI" id="CHEBI:59789"/>
        <dbReference type="ChEBI" id="CHEBI:64428"/>
        <dbReference type="ChEBI" id="CHEBI:74415"/>
        <dbReference type="ChEBI" id="CHEBI:74417"/>
        <dbReference type="EC" id="2.8.4.3"/>
    </reaction>
</comment>
<comment type="cofactor">
    <cofactor evidence="1">
        <name>[4Fe-4S] cluster</name>
        <dbReference type="ChEBI" id="CHEBI:49883"/>
    </cofactor>
    <text evidence="1">Binds 2 [4Fe-4S] clusters. One cluster is coordinated with 3 cysteines and an exchangeable S-adenosyl-L-methionine.</text>
</comment>
<comment type="subunit">
    <text evidence="1">Monomer.</text>
</comment>
<comment type="subcellular location">
    <subcellularLocation>
        <location evidence="1">Cytoplasm</location>
    </subcellularLocation>
</comment>
<comment type="similarity">
    <text evidence="1">Belongs to the methylthiotransferase family. MiaB subfamily.</text>
</comment>
<dbReference type="EC" id="2.8.4.3" evidence="1"/>
<dbReference type="EMBL" id="BX569693">
    <property type="protein sequence ID" value="CAE08155.1"/>
    <property type="molecule type" value="Genomic_DNA"/>
</dbReference>
<dbReference type="SMR" id="Q7U5R0"/>
<dbReference type="STRING" id="84588.SYNW1640"/>
<dbReference type="KEGG" id="syw:SYNW1640"/>
<dbReference type="eggNOG" id="COG0621">
    <property type="taxonomic scope" value="Bacteria"/>
</dbReference>
<dbReference type="HOGENOM" id="CLU_018697_2_2_3"/>
<dbReference type="Proteomes" id="UP000001422">
    <property type="component" value="Chromosome"/>
</dbReference>
<dbReference type="GO" id="GO:0005737">
    <property type="term" value="C:cytoplasm"/>
    <property type="evidence" value="ECO:0007669"/>
    <property type="project" value="UniProtKB-SubCell"/>
</dbReference>
<dbReference type="GO" id="GO:0051539">
    <property type="term" value="F:4 iron, 4 sulfur cluster binding"/>
    <property type="evidence" value="ECO:0007669"/>
    <property type="project" value="UniProtKB-UniRule"/>
</dbReference>
<dbReference type="GO" id="GO:0046872">
    <property type="term" value="F:metal ion binding"/>
    <property type="evidence" value="ECO:0007669"/>
    <property type="project" value="UniProtKB-KW"/>
</dbReference>
<dbReference type="GO" id="GO:0035596">
    <property type="term" value="F:methylthiotransferase activity"/>
    <property type="evidence" value="ECO:0007669"/>
    <property type="project" value="InterPro"/>
</dbReference>
<dbReference type="GO" id="GO:0035600">
    <property type="term" value="P:tRNA methylthiolation"/>
    <property type="evidence" value="ECO:0007669"/>
    <property type="project" value="TreeGrafter"/>
</dbReference>
<dbReference type="CDD" id="cd01335">
    <property type="entry name" value="Radical_SAM"/>
    <property type="match status" value="1"/>
</dbReference>
<dbReference type="FunFam" id="3.40.50.12160:FF:000006">
    <property type="entry name" value="tRNA-2-methylthio-N(6)-dimethylallyladenosine synthase"/>
    <property type="match status" value="1"/>
</dbReference>
<dbReference type="FunFam" id="3.80.30.20:FF:000001">
    <property type="entry name" value="tRNA-2-methylthio-N(6)-dimethylallyladenosine synthase 2"/>
    <property type="match status" value="1"/>
</dbReference>
<dbReference type="Gene3D" id="3.40.50.12160">
    <property type="entry name" value="Methylthiotransferase, N-terminal domain"/>
    <property type="match status" value="1"/>
</dbReference>
<dbReference type="Gene3D" id="3.80.30.20">
    <property type="entry name" value="tm_1862 like domain"/>
    <property type="match status" value="1"/>
</dbReference>
<dbReference type="HAMAP" id="MF_01864">
    <property type="entry name" value="tRNA_metthiotr_MiaB"/>
    <property type="match status" value="1"/>
</dbReference>
<dbReference type="InterPro" id="IPR006638">
    <property type="entry name" value="Elp3/MiaA/NifB-like_rSAM"/>
</dbReference>
<dbReference type="InterPro" id="IPR005839">
    <property type="entry name" value="Methylthiotransferase"/>
</dbReference>
<dbReference type="InterPro" id="IPR020612">
    <property type="entry name" value="Methylthiotransferase_CS"/>
</dbReference>
<dbReference type="InterPro" id="IPR013848">
    <property type="entry name" value="Methylthiotransferase_N"/>
</dbReference>
<dbReference type="InterPro" id="IPR038135">
    <property type="entry name" value="Methylthiotransferase_N_sf"/>
</dbReference>
<dbReference type="InterPro" id="IPR006463">
    <property type="entry name" value="MiaB_methiolase"/>
</dbReference>
<dbReference type="InterPro" id="IPR007197">
    <property type="entry name" value="rSAM"/>
</dbReference>
<dbReference type="InterPro" id="IPR023404">
    <property type="entry name" value="rSAM_horseshoe"/>
</dbReference>
<dbReference type="InterPro" id="IPR002792">
    <property type="entry name" value="TRAM_dom"/>
</dbReference>
<dbReference type="NCBIfam" id="TIGR01574">
    <property type="entry name" value="miaB-methiolase"/>
    <property type="match status" value="1"/>
</dbReference>
<dbReference type="NCBIfam" id="TIGR00089">
    <property type="entry name" value="MiaB/RimO family radical SAM methylthiotransferase"/>
    <property type="match status" value="1"/>
</dbReference>
<dbReference type="PANTHER" id="PTHR43020">
    <property type="entry name" value="CDK5 REGULATORY SUBUNIT-ASSOCIATED PROTEIN 1"/>
    <property type="match status" value="1"/>
</dbReference>
<dbReference type="PANTHER" id="PTHR43020:SF2">
    <property type="entry name" value="MITOCHONDRIAL TRNA METHYLTHIOTRANSFERASE CDK5RAP1"/>
    <property type="match status" value="1"/>
</dbReference>
<dbReference type="Pfam" id="PF04055">
    <property type="entry name" value="Radical_SAM"/>
    <property type="match status" value="1"/>
</dbReference>
<dbReference type="Pfam" id="PF01938">
    <property type="entry name" value="TRAM"/>
    <property type="match status" value="1"/>
</dbReference>
<dbReference type="Pfam" id="PF00919">
    <property type="entry name" value="UPF0004"/>
    <property type="match status" value="1"/>
</dbReference>
<dbReference type="SFLD" id="SFLDF00273">
    <property type="entry name" value="(dimethylallyl)adenosine_tRNA"/>
    <property type="match status" value="1"/>
</dbReference>
<dbReference type="SFLD" id="SFLDG01082">
    <property type="entry name" value="B12-binding_domain_containing"/>
    <property type="match status" value="1"/>
</dbReference>
<dbReference type="SFLD" id="SFLDG01061">
    <property type="entry name" value="methylthiotransferase"/>
    <property type="match status" value="1"/>
</dbReference>
<dbReference type="SMART" id="SM00729">
    <property type="entry name" value="Elp3"/>
    <property type="match status" value="1"/>
</dbReference>
<dbReference type="SUPFAM" id="SSF102114">
    <property type="entry name" value="Radical SAM enzymes"/>
    <property type="match status" value="1"/>
</dbReference>
<dbReference type="PROSITE" id="PS51449">
    <property type="entry name" value="MTTASE_N"/>
    <property type="match status" value="1"/>
</dbReference>
<dbReference type="PROSITE" id="PS01278">
    <property type="entry name" value="MTTASE_RADICAL"/>
    <property type="match status" value="1"/>
</dbReference>
<dbReference type="PROSITE" id="PS51918">
    <property type="entry name" value="RADICAL_SAM"/>
    <property type="match status" value="1"/>
</dbReference>
<dbReference type="PROSITE" id="PS50926">
    <property type="entry name" value="TRAM"/>
    <property type="match status" value="1"/>
</dbReference>
<protein>
    <recommendedName>
        <fullName evidence="1">tRNA-2-methylthio-N(6)-dimethylallyladenosine synthase</fullName>
        <ecNumber evidence="1">2.8.4.3</ecNumber>
    </recommendedName>
    <alternativeName>
        <fullName evidence="1">(Dimethylallyl)adenosine tRNA methylthiotransferase MiaB</fullName>
    </alternativeName>
    <alternativeName>
        <fullName evidence="1">tRNA-i(6)A37 methylthiotransferase</fullName>
    </alternativeName>
</protein>
<reference key="1">
    <citation type="journal article" date="2003" name="Nature">
        <title>The genome of a motile marine Synechococcus.</title>
        <authorList>
            <person name="Palenik B."/>
            <person name="Brahamsha B."/>
            <person name="Larimer F.W."/>
            <person name="Land M.L."/>
            <person name="Hauser L."/>
            <person name="Chain P."/>
            <person name="Lamerdin J.E."/>
            <person name="Regala W."/>
            <person name="Allen E.E."/>
            <person name="McCarren J."/>
            <person name="Paulsen I.T."/>
            <person name="Dufresne A."/>
            <person name="Partensky F."/>
            <person name="Webb E.A."/>
            <person name="Waterbury J."/>
        </authorList>
    </citation>
    <scope>NUCLEOTIDE SEQUENCE [LARGE SCALE GENOMIC DNA]</scope>
    <source>
        <strain>WH8102</strain>
    </source>
</reference>
<evidence type="ECO:0000255" key="1">
    <source>
        <dbReference type="HAMAP-Rule" id="MF_01864"/>
    </source>
</evidence>
<evidence type="ECO:0000255" key="2">
    <source>
        <dbReference type="PROSITE-ProRule" id="PRU01266"/>
    </source>
</evidence>
<sequence length="460" mass="51756">MPAANAQSRGSYWITTFGCQMNKADSERMAGILESMGYRAANAELEADLVLYNTCTIRDNAEQKVYSYLGRQAQRKRLDPNLTLIVAGCVAQQEGESLLRRVPELDLVMGPQHANRLEVLLNRVDSGQQVVATEDHHILEDITTARRDSSICGWVNVIYGCNERCTYCVVPSVRGKEQSRLPEAIRLEMEGLAAQGYKEITLLGQNIDAYGRDLPGITPEGRRQHTLTDLLHQVHDVSGIKRIRFATSHPRYFTERLIDACADLPKLCEHFHIPFQSGDNDVLRAMARGYTVERYRRIIDRIRERMPDASLSADVIVAFPGETDLQYQRTLDLIEEIGFDQVNTAAYSPRPNTPAATWDNQLPEEVKVIRLQTINALVERCARERNARYAGRTEEVLAEGINPKDPSQLMGRTRTNRLTFFQAAGPDGHQHNPGDLVNVRIDAVRSFSLSGTPLPCVEQR</sequence>
<name>MIAB_PARMW</name>
<gene>
    <name evidence="1" type="primary">miaB</name>
    <name type="ordered locus">SYNW1640</name>
</gene>
<organism>
    <name type="scientific">Parasynechococcus marenigrum (strain WH8102)</name>
    <dbReference type="NCBI Taxonomy" id="84588"/>
    <lineage>
        <taxon>Bacteria</taxon>
        <taxon>Bacillati</taxon>
        <taxon>Cyanobacteriota</taxon>
        <taxon>Cyanophyceae</taxon>
        <taxon>Synechococcales</taxon>
        <taxon>Prochlorococcaceae</taxon>
        <taxon>Parasynechococcus</taxon>
        <taxon>Parasynechococcus marenigrum</taxon>
    </lineage>
</organism>
<keyword id="KW-0004">4Fe-4S</keyword>
<keyword id="KW-0963">Cytoplasm</keyword>
<keyword id="KW-0408">Iron</keyword>
<keyword id="KW-0411">Iron-sulfur</keyword>
<keyword id="KW-0479">Metal-binding</keyword>
<keyword id="KW-0949">S-adenosyl-L-methionine</keyword>
<keyword id="KW-0808">Transferase</keyword>
<keyword id="KW-0819">tRNA processing</keyword>
<feature type="chain" id="PRO_0000374602" description="tRNA-2-methylthio-N(6)-dimethylallyladenosine synthase">
    <location>
        <begin position="1"/>
        <end position="460"/>
    </location>
</feature>
<feature type="domain" description="MTTase N-terminal" evidence="1">
    <location>
        <begin position="10"/>
        <end position="126"/>
    </location>
</feature>
<feature type="domain" description="Radical SAM core" evidence="2">
    <location>
        <begin position="147"/>
        <end position="384"/>
    </location>
</feature>
<feature type="domain" description="TRAM" evidence="1">
    <location>
        <begin position="387"/>
        <end position="455"/>
    </location>
</feature>
<feature type="binding site" evidence="1">
    <location>
        <position position="19"/>
    </location>
    <ligand>
        <name>[4Fe-4S] cluster</name>
        <dbReference type="ChEBI" id="CHEBI:49883"/>
        <label>1</label>
    </ligand>
</feature>
<feature type="binding site" evidence="1">
    <location>
        <position position="55"/>
    </location>
    <ligand>
        <name>[4Fe-4S] cluster</name>
        <dbReference type="ChEBI" id="CHEBI:49883"/>
        <label>1</label>
    </ligand>
</feature>
<feature type="binding site" evidence="1">
    <location>
        <position position="89"/>
    </location>
    <ligand>
        <name>[4Fe-4S] cluster</name>
        <dbReference type="ChEBI" id="CHEBI:49883"/>
        <label>1</label>
    </ligand>
</feature>
<feature type="binding site" evidence="1">
    <location>
        <position position="161"/>
    </location>
    <ligand>
        <name>[4Fe-4S] cluster</name>
        <dbReference type="ChEBI" id="CHEBI:49883"/>
        <label>2</label>
        <note>4Fe-4S-S-AdoMet</note>
    </ligand>
</feature>
<feature type="binding site" evidence="1">
    <location>
        <position position="165"/>
    </location>
    <ligand>
        <name>[4Fe-4S] cluster</name>
        <dbReference type="ChEBI" id="CHEBI:49883"/>
        <label>2</label>
        <note>4Fe-4S-S-AdoMet</note>
    </ligand>
</feature>
<feature type="binding site" evidence="1">
    <location>
        <position position="168"/>
    </location>
    <ligand>
        <name>[4Fe-4S] cluster</name>
        <dbReference type="ChEBI" id="CHEBI:49883"/>
        <label>2</label>
        <note>4Fe-4S-S-AdoMet</note>
    </ligand>
</feature>
<accession>Q7U5R0</accession>
<proteinExistence type="inferred from homology"/>